<organism>
    <name type="scientific">Aliivibrio salmonicida (strain LFI1238)</name>
    <name type="common">Vibrio salmonicida (strain LFI1238)</name>
    <dbReference type="NCBI Taxonomy" id="316275"/>
    <lineage>
        <taxon>Bacteria</taxon>
        <taxon>Pseudomonadati</taxon>
        <taxon>Pseudomonadota</taxon>
        <taxon>Gammaproteobacteria</taxon>
        <taxon>Vibrionales</taxon>
        <taxon>Vibrionaceae</taxon>
        <taxon>Aliivibrio</taxon>
    </lineage>
</organism>
<feature type="chain" id="PRO_1000127487" description="D-aminoacyl-tRNA deacylase">
    <location>
        <begin position="1"/>
        <end position="144"/>
    </location>
</feature>
<feature type="short sequence motif" description="Gly-cisPro motif, important for rejection of L-amino acids" evidence="1">
    <location>
        <begin position="136"/>
        <end position="137"/>
    </location>
</feature>
<reference key="1">
    <citation type="journal article" date="2008" name="BMC Genomics">
        <title>The genome sequence of the fish pathogen Aliivibrio salmonicida strain LFI1238 shows extensive evidence of gene decay.</title>
        <authorList>
            <person name="Hjerde E."/>
            <person name="Lorentzen M.S."/>
            <person name="Holden M.T."/>
            <person name="Seeger K."/>
            <person name="Paulsen S."/>
            <person name="Bason N."/>
            <person name="Churcher C."/>
            <person name="Harris D."/>
            <person name="Norbertczak H."/>
            <person name="Quail M.A."/>
            <person name="Sanders S."/>
            <person name="Thurston S."/>
            <person name="Parkhill J."/>
            <person name="Willassen N.P."/>
            <person name="Thomson N.R."/>
        </authorList>
    </citation>
    <scope>NUCLEOTIDE SEQUENCE [LARGE SCALE GENOMIC DNA]</scope>
    <source>
        <strain>LFI1238</strain>
    </source>
</reference>
<protein>
    <recommendedName>
        <fullName evidence="1">D-aminoacyl-tRNA deacylase</fullName>
        <shortName evidence="1">DTD</shortName>
        <ecNumber evidence="1">3.1.1.96</ecNumber>
    </recommendedName>
    <alternativeName>
        <fullName evidence="1">Gly-tRNA(Ala) deacylase</fullName>
    </alternativeName>
</protein>
<evidence type="ECO:0000255" key="1">
    <source>
        <dbReference type="HAMAP-Rule" id="MF_00518"/>
    </source>
</evidence>
<gene>
    <name evidence="1" type="primary">dtd</name>
    <name type="ordered locus">VSAL_I2937</name>
</gene>
<dbReference type="EC" id="3.1.1.96" evidence="1"/>
<dbReference type="EMBL" id="FM178379">
    <property type="protein sequence ID" value="CAQ80621.1"/>
    <property type="molecule type" value="Genomic_DNA"/>
</dbReference>
<dbReference type="RefSeq" id="WP_012551351.1">
    <property type="nucleotide sequence ID" value="NC_011312.1"/>
</dbReference>
<dbReference type="SMR" id="B6EGQ6"/>
<dbReference type="KEGG" id="vsa:VSAL_I2937"/>
<dbReference type="eggNOG" id="COG1490">
    <property type="taxonomic scope" value="Bacteria"/>
</dbReference>
<dbReference type="HOGENOM" id="CLU_076901_1_1_6"/>
<dbReference type="Proteomes" id="UP000001730">
    <property type="component" value="Chromosome 1"/>
</dbReference>
<dbReference type="GO" id="GO:0005737">
    <property type="term" value="C:cytoplasm"/>
    <property type="evidence" value="ECO:0007669"/>
    <property type="project" value="UniProtKB-SubCell"/>
</dbReference>
<dbReference type="GO" id="GO:0051500">
    <property type="term" value="F:D-tyrosyl-tRNA(Tyr) deacylase activity"/>
    <property type="evidence" value="ECO:0007669"/>
    <property type="project" value="TreeGrafter"/>
</dbReference>
<dbReference type="GO" id="GO:0106026">
    <property type="term" value="F:Gly-tRNA(Ala) deacylase activity"/>
    <property type="evidence" value="ECO:0007669"/>
    <property type="project" value="UniProtKB-UniRule"/>
</dbReference>
<dbReference type="GO" id="GO:0043908">
    <property type="term" value="F:Ser(Gly)-tRNA(Ala) hydrolase activity"/>
    <property type="evidence" value="ECO:0007669"/>
    <property type="project" value="UniProtKB-UniRule"/>
</dbReference>
<dbReference type="GO" id="GO:0000049">
    <property type="term" value="F:tRNA binding"/>
    <property type="evidence" value="ECO:0007669"/>
    <property type="project" value="UniProtKB-UniRule"/>
</dbReference>
<dbReference type="GO" id="GO:0019478">
    <property type="term" value="P:D-amino acid catabolic process"/>
    <property type="evidence" value="ECO:0007669"/>
    <property type="project" value="UniProtKB-UniRule"/>
</dbReference>
<dbReference type="CDD" id="cd00563">
    <property type="entry name" value="Dtyr_deacylase"/>
    <property type="match status" value="1"/>
</dbReference>
<dbReference type="FunFam" id="3.50.80.10:FF:000001">
    <property type="entry name" value="D-aminoacyl-tRNA deacylase"/>
    <property type="match status" value="1"/>
</dbReference>
<dbReference type="Gene3D" id="3.50.80.10">
    <property type="entry name" value="D-tyrosyl-tRNA(Tyr) deacylase"/>
    <property type="match status" value="1"/>
</dbReference>
<dbReference type="HAMAP" id="MF_00518">
    <property type="entry name" value="Deacylase_Dtd"/>
    <property type="match status" value="1"/>
</dbReference>
<dbReference type="InterPro" id="IPR003732">
    <property type="entry name" value="Daa-tRNA_deacyls_DTD"/>
</dbReference>
<dbReference type="InterPro" id="IPR023509">
    <property type="entry name" value="DTD-like_sf"/>
</dbReference>
<dbReference type="NCBIfam" id="TIGR00256">
    <property type="entry name" value="D-aminoacyl-tRNA deacylase"/>
    <property type="match status" value="1"/>
</dbReference>
<dbReference type="PANTHER" id="PTHR10472:SF5">
    <property type="entry name" value="D-AMINOACYL-TRNA DEACYLASE 1"/>
    <property type="match status" value="1"/>
</dbReference>
<dbReference type="PANTHER" id="PTHR10472">
    <property type="entry name" value="D-TYROSYL-TRNA TYR DEACYLASE"/>
    <property type="match status" value="1"/>
</dbReference>
<dbReference type="Pfam" id="PF02580">
    <property type="entry name" value="Tyr_Deacylase"/>
    <property type="match status" value="1"/>
</dbReference>
<dbReference type="SUPFAM" id="SSF69500">
    <property type="entry name" value="DTD-like"/>
    <property type="match status" value="1"/>
</dbReference>
<comment type="function">
    <text evidence="1">An aminoacyl-tRNA editing enzyme that deacylates mischarged D-aminoacyl-tRNAs. Also deacylates mischarged glycyl-tRNA(Ala), protecting cells against glycine mischarging by AlaRS. Acts via tRNA-based rather than protein-based catalysis; rejects L-amino acids rather than detecting D-amino acids in the active site. By recycling D-aminoacyl-tRNA to D-amino acids and free tRNA molecules, this enzyme counteracts the toxicity associated with the formation of D-aminoacyl-tRNA entities in vivo and helps enforce protein L-homochirality.</text>
</comment>
<comment type="catalytic activity">
    <reaction evidence="1">
        <text>glycyl-tRNA(Ala) + H2O = tRNA(Ala) + glycine + H(+)</text>
        <dbReference type="Rhea" id="RHEA:53744"/>
        <dbReference type="Rhea" id="RHEA-COMP:9657"/>
        <dbReference type="Rhea" id="RHEA-COMP:13640"/>
        <dbReference type="ChEBI" id="CHEBI:15377"/>
        <dbReference type="ChEBI" id="CHEBI:15378"/>
        <dbReference type="ChEBI" id="CHEBI:57305"/>
        <dbReference type="ChEBI" id="CHEBI:78442"/>
        <dbReference type="ChEBI" id="CHEBI:78522"/>
        <dbReference type="EC" id="3.1.1.96"/>
    </reaction>
</comment>
<comment type="catalytic activity">
    <reaction evidence="1">
        <text>a D-aminoacyl-tRNA + H2O = a tRNA + a D-alpha-amino acid + H(+)</text>
        <dbReference type="Rhea" id="RHEA:13953"/>
        <dbReference type="Rhea" id="RHEA-COMP:10123"/>
        <dbReference type="Rhea" id="RHEA-COMP:10124"/>
        <dbReference type="ChEBI" id="CHEBI:15377"/>
        <dbReference type="ChEBI" id="CHEBI:15378"/>
        <dbReference type="ChEBI" id="CHEBI:59871"/>
        <dbReference type="ChEBI" id="CHEBI:78442"/>
        <dbReference type="ChEBI" id="CHEBI:79333"/>
        <dbReference type="EC" id="3.1.1.96"/>
    </reaction>
</comment>
<comment type="subunit">
    <text evidence="1">Homodimer.</text>
</comment>
<comment type="subcellular location">
    <subcellularLocation>
        <location evidence="1">Cytoplasm</location>
    </subcellularLocation>
</comment>
<comment type="domain">
    <text evidence="1">A Gly-cisPro motif from one monomer fits into the active site of the other monomer to allow specific chiral rejection of L-amino acids.</text>
</comment>
<comment type="similarity">
    <text evidence="1">Belongs to the DTD family.</text>
</comment>
<proteinExistence type="inferred from homology"/>
<keyword id="KW-0963">Cytoplasm</keyword>
<keyword id="KW-0378">Hydrolase</keyword>
<keyword id="KW-0694">RNA-binding</keyword>
<keyword id="KW-0820">tRNA-binding</keyword>
<accession>B6EGQ6</accession>
<name>DTD_ALISL</name>
<sequence length="144" mass="16068">MIALIQRVSEASVRVDGEITGEINQGLLILLGVEREDDEAKAKRLVERVLTYRIFEDDEGKMNLNVQQVNGSVLVVSQFTLPADTKKGTRPGFSKGANPIDAERLYDHFSDLCDEKLTTQRGRFAADMKVSLVNDGPVTFWLQV</sequence>